<reference key="1">
    <citation type="submission" date="2007-06" db="EMBL/GenBank/DDBJ databases">
        <title>Complete sequence of Methanococcus vannielii SB.</title>
        <authorList>
            <consortium name="US DOE Joint Genome Institute"/>
            <person name="Copeland A."/>
            <person name="Lucas S."/>
            <person name="Lapidus A."/>
            <person name="Barry K."/>
            <person name="Glavina del Rio T."/>
            <person name="Dalin E."/>
            <person name="Tice H."/>
            <person name="Pitluck S."/>
            <person name="Chain P."/>
            <person name="Malfatti S."/>
            <person name="Shin M."/>
            <person name="Vergez L."/>
            <person name="Schmutz J."/>
            <person name="Larimer F."/>
            <person name="Land M."/>
            <person name="Hauser L."/>
            <person name="Kyrpides N."/>
            <person name="Anderson I."/>
            <person name="Sieprawska-Lupa M."/>
            <person name="Whitman W.B."/>
            <person name="Richardson P."/>
        </authorList>
    </citation>
    <scope>NUCLEOTIDE SEQUENCE [LARGE SCALE GENOMIC DNA]</scope>
    <source>
        <strain>ATCC 35089 / DSM 1224 / JCM 13029 / OCM 148 / SB</strain>
    </source>
</reference>
<gene>
    <name evidence="1" type="primary">purA</name>
    <name type="ordered locus">Mevan_0743</name>
</gene>
<protein>
    <recommendedName>
        <fullName evidence="1">Adenylosuccinate synthetase</fullName>
        <shortName evidence="1">AMPSase</shortName>
        <shortName evidence="1">AdSS</shortName>
        <ecNumber evidence="1">6.3.4.4</ecNumber>
    </recommendedName>
    <alternativeName>
        <fullName evidence="1">IMP--aspartate ligase</fullName>
    </alternativeName>
</protein>
<dbReference type="EC" id="6.3.4.4" evidence="1"/>
<dbReference type="EMBL" id="CP000742">
    <property type="protein sequence ID" value="ABR54649.1"/>
    <property type="molecule type" value="Genomic_DNA"/>
</dbReference>
<dbReference type="RefSeq" id="WP_011972551.1">
    <property type="nucleotide sequence ID" value="NC_009634.1"/>
</dbReference>
<dbReference type="SMR" id="A6UQ77"/>
<dbReference type="STRING" id="406327.Mevan_0743"/>
<dbReference type="GeneID" id="5325537"/>
<dbReference type="KEGG" id="mvn:Mevan_0743"/>
<dbReference type="eggNOG" id="arCOG04387">
    <property type="taxonomic scope" value="Archaea"/>
</dbReference>
<dbReference type="HOGENOM" id="CLU_029848_0_0_2"/>
<dbReference type="OrthoDB" id="372247at2157"/>
<dbReference type="UniPathway" id="UPA00075">
    <property type="reaction ID" value="UER00335"/>
</dbReference>
<dbReference type="Proteomes" id="UP000001107">
    <property type="component" value="Chromosome"/>
</dbReference>
<dbReference type="GO" id="GO:0005737">
    <property type="term" value="C:cytoplasm"/>
    <property type="evidence" value="ECO:0007669"/>
    <property type="project" value="UniProtKB-SubCell"/>
</dbReference>
<dbReference type="GO" id="GO:0004019">
    <property type="term" value="F:adenylosuccinate synthase activity"/>
    <property type="evidence" value="ECO:0007669"/>
    <property type="project" value="UniProtKB-UniRule"/>
</dbReference>
<dbReference type="GO" id="GO:0005525">
    <property type="term" value="F:GTP binding"/>
    <property type="evidence" value="ECO:0007669"/>
    <property type="project" value="UniProtKB-UniRule"/>
</dbReference>
<dbReference type="GO" id="GO:0000287">
    <property type="term" value="F:magnesium ion binding"/>
    <property type="evidence" value="ECO:0007669"/>
    <property type="project" value="UniProtKB-UniRule"/>
</dbReference>
<dbReference type="GO" id="GO:0044208">
    <property type="term" value="P:'de novo' AMP biosynthetic process"/>
    <property type="evidence" value="ECO:0007669"/>
    <property type="project" value="UniProtKB-UniRule"/>
</dbReference>
<dbReference type="GO" id="GO:0046040">
    <property type="term" value="P:IMP metabolic process"/>
    <property type="evidence" value="ECO:0007669"/>
    <property type="project" value="TreeGrafter"/>
</dbReference>
<dbReference type="CDD" id="cd03108">
    <property type="entry name" value="AdSS"/>
    <property type="match status" value="1"/>
</dbReference>
<dbReference type="Gene3D" id="3.40.440.10">
    <property type="entry name" value="Adenylosuccinate Synthetase, subunit A, domain 1"/>
    <property type="match status" value="2"/>
</dbReference>
<dbReference type="Gene3D" id="3.90.170.10">
    <property type="entry name" value="Adenylosuccinate Synthetase, subunit A, domain 3"/>
    <property type="match status" value="2"/>
</dbReference>
<dbReference type="HAMAP" id="MF_00011">
    <property type="entry name" value="Adenylosucc_synth"/>
    <property type="match status" value="1"/>
</dbReference>
<dbReference type="InterPro" id="IPR018220">
    <property type="entry name" value="Adenylosuccin_syn_GTP-bd"/>
</dbReference>
<dbReference type="InterPro" id="IPR042109">
    <property type="entry name" value="Adenylosuccinate_synth_dom1"/>
</dbReference>
<dbReference type="InterPro" id="IPR042111">
    <property type="entry name" value="Adenylosuccinate_synth_dom3"/>
</dbReference>
<dbReference type="InterPro" id="IPR001114">
    <property type="entry name" value="Adenylosuccinate_synthetase"/>
</dbReference>
<dbReference type="InterPro" id="IPR027417">
    <property type="entry name" value="P-loop_NTPase"/>
</dbReference>
<dbReference type="NCBIfam" id="NF003295">
    <property type="entry name" value="PRK04293.1"/>
    <property type="match status" value="1"/>
</dbReference>
<dbReference type="PANTHER" id="PTHR11846">
    <property type="entry name" value="ADENYLOSUCCINATE SYNTHETASE"/>
    <property type="match status" value="1"/>
</dbReference>
<dbReference type="PANTHER" id="PTHR11846:SF0">
    <property type="entry name" value="ADENYLOSUCCINATE SYNTHETASE"/>
    <property type="match status" value="1"/>
</dbReference>
<dbReference type="Pfam" id="PF00709">
    <property type="entry name" value="Adenylsucc_synt"/>
    <property type="match status" value="2"/>
</dbReference>
<dbReference type="SMART" id="SM00788">
    <property type="entry name" value="Adenylsucc_synt"/>
    <property type="match status" value="1"/>
</dbReference>
<dbReference type="SUPFAM" id="SSF52540">
    <property type="entry name" value="P-loop containing nucleoside triphosphate hydrolases"/>
    <property type="match status" value="1"/>
</dbReference>
<dbReference type="PROSITE" id="PS01266">
    <property type="entry name" value="ADENYLOSUCCIN_SYN_1"/>
    <property type="match status" value="1"/>
</dbReference>
<comment type="function">
    <text evidence="1">Plays an important role in the de novo pathway of purine nucleotide biosynthesis. Catalyzes the first committed step in the biosynthesis of AMP from IMP.</text>
</comment>
<comment type="catalytic activity">
    <reaction evidence="1">
        <text>IMP + L-aspartate + GTP = N(6)-(1,2-dicarboxyethyl)-AMP + GDP + phosphate + 2 H(+)</text>
        <dbReference type="Rhea" id="RHEA:15753"/>
        <dbReference type="ChEBI" id="CHEBI:15378"/>
        <dbReference type="ChEBI" id="CHEBI:29991"/>
        <dbReference type="ChEBI" id="CHEBI:37565"/>
        <dbReference type="ChEBI" id="CHEBI:43474"/>
        <dbReference type="ChEBI" id="CHEBI:57567"/>
        <dbReference type="ChEBI" id="CHEBI:58053"/>
        <dbReference type="ChEBI" id="CHEBI:58189"/>
        <dbReference type="EC" id="6.3.4.4"/>
    </reaction>
</comment>
<comment type="cofactor">
    <cofactor evidence="1">
        <name>Mg(2+)</name>
        <dbReference type="ChEBI" id="CHEBI:18420"/>
    </cofactor>
    <text evidence="1">Binds 1 Mg(2+) ion per subunit.</text>
</comment>
<comment type="pathway">
    <text evidence="1">Purine metabolism; AMP biosynthesis via de novo pathway; AMP from IMP: step 1/2.</text>
</comment>
<comment type="subunit">
    <text evidence="1">Homodimer.</text>
</comment>
<comment type="subcellular location">
    <subcellularLocation>
        <location evidence="1">Cytoplasm</location>
    </subcellularLocation>
</comment>
<comment type="similarity">
    <text evidence="1">Belongs to the adenylosuccinate synthetase family.</text>
</comment>
<keyword id="KW-0963">Cytoplasm</keyword>
<keyword id="KW-0342">GTP-binding</keyword>
<keyword id="KW-0436">Ligase</keyword>
<keyword id="KW-0460">Magnesium</keyword>
<keyword id="KW-0479">Metal-binding</keyword>
<keyword id="KW-0547">Nucleotide-binding</keyword>
<keyword id="KW-0658">Purine biosynthesis</keyword>
<accession>A6UQ77</accession>
<name>PURA_METVS</name>
<feature type="chain" id="PRO_1000000863" description="Adenylosuccinate synthetase">
    <location>
        <begin position="1"/>
        <end position="338"/>
    </location>
</feature>
<feature type="active site" description="Proton acceptor" evidence="1">
    <location>
        <position position="13"/>
    </location>
</feature>
<feature type="active site" description="Proton donor" evidence="1">
    <location>
        <position position="43"/>
    </location>
</feature>
<feature type="binding site" evidence="1">
    <location>
        <begin position="12"/>
        <end position="18"/>
    </location>
    <ligand>
        <name>GTP</name>
        <dbReference type="ChEBI" id="CHEBI:37565"/>
    </ligand>
</feature>
<feature type="binding site" description="in other chain" evidence="1">
    <location>
        <begin position="13"/>
        <end position="16"/>
    </location>
    <ligand>
        <name>IMP</name>
        <dbReference type="ChEBI" id="CHEBI:58053"/>
        <note>ligand shared between dimeric partners</note>
    </ligand>
</feature>
<feature type="binding site" evidence="1">
    <location>
        <position position="13"/>
    </location>
    <ligand>
        <name>Mg(2+)</name>
        <dbReference type="ChEBI" id="CHEBI:18420"/>
    </ligand>
</feature>
<feature type="binding site" description="in other chain" evidence="1">
    <location>
        <begin position="40"/>
        <end position="43"/>
    </location>
    <ligand>
        <name>IMP</name>
        <dbReference type="ChEBI" id="CHEBI:58053"/>
        <note>ligand shared between dimeric partners</note>
    </ligand>
</feature>
<feature type="binding site" evidence="1">
    <location>
        <begin position="42"/>
        <end position="44"/>
    </location>
    <ligand>
        <name>GTP</name>
        <dbReference type="ChEBI" id="CHEBI:37565"/>
    </ligand>
</feature>
<feature type="binding site" evidence="1">
    <location>
        <position position="42"/>
    </location>
    <ligand>
        <name>Mg(2+)</name>
        <dbReference type="ChEBI" id="CHEBI:18420"/>
    </ligand>
</feature>
<feature type="binding site" description="in other chain" evidence="1">
    <location>
        <position position="127"/>
    </location>
    <ligand>
        <name>IMP</name>
        <dbReference type="ChEBI" id="CHEBI:58053"/>
        <note>ligand shared between dimeric partners</note>
    </ligand>
</feature>
<feature type="binding site" evidence="1">
    <location>
        <position position="141"/>
    </location>
    <ligand>
        <name>IMP</name>
        <dbReference type="ChEBI" id="CHEBI:58053"/>
        <note>ligand shared between dimeric partners</note>
    </ligand>
</feature>
<feature type="binding site" description="in other chain" evidence="1">
    <location>
        <position position="179"/>
    </location>
    <ligand>
        <name>IMP</name>
        <dbReference type="ChEBI" id="CHEBI:58053"/>
        <note>ligand shared between dimeric partners</note>
    </ligand>
</feature>
<feature type="binding site" description="in other chain" evidence="1">
    <location>
        <position position="194"/>
    </location>
    <ligand>
        <name>IMP</name>
        <dbReference type="ChEBI" id="CHEBI:58053"/>
        <note>ligand shared between dimeric partners</note>
    </ligand>
</feature>
<feature type="binding site" evidence="1">
    <location>
        <begin position="252"/>
        <end position="258"/>
    </location>
    <ligand>
        <name>substrate</name>
    </ligand>
</feature>
<feature type="binding site" description="in other chain" evidence="1">
    <location>
        <position position="256"/>
    </location>
    <ligand>
        <name>IMP</name>
        <dbReference type="ChEBI" id="CHEBI:58053"/>
        <note>ligand shared between dimeric partners</note>
    </ligand>
</feature>
<feature type="binding site" evidence="1">
    <location>
        <position position="258"/>
    </location>
    <ligand>
        <name>GTP</name>
        <dbReference type="ChEBI" id="CHEBI:37565"/>
    </ligand>
</feature>
<feature type="binding site" evidence="1">
    <location>
        <begin position="284"/>
        <end position="286"/>
    </location>
    <ligand>
        <name>GTP</name>
        <dbReference type="ChEBI" id="CHEBI:37565"/>
    </ligand>
</feature>
<feature type="binding site" evidence="1">
    <location>
        <begin position="324"/>
        <end position="326"/>
    </location>
    <ligand>
        <name>GTP</name>
        <dbReference type="ChEBI" id="CHEBI:37565"/>
    </ligand>
</feature>
<sequence>MTCTIIVGGQWGDEGKGKVISYLCKKDNPSIIARGGVGPNAGHTVEVDGEKYGIRMVPTGFPNVNAKLAVGAGVLTDPEVLVREIEKLQKFNVGERIIIDYRCGVIESKHRDLDKSNEHLSKEIGSTGTGCGPANVDRAMRTLKLAKDVSELSKYLGDVSEAVNNAIESGDNVIIEGTQGSLLSLYYGSYPYVTSKDTNAASFAADVGLGPTKIDEVVAVFKSYPTRVGEGPFPTEMSLEEAEKLGVVEYGTVTGRRRRVGYFDFELAKKVCKLNGATQIAITCLDKYDPLCYGIIDYNELSEKGKAFIKEVEEKVGVRVTIISTGPELSQTIDIRNK</sequence>
<proteinExistence type="inferred from homology"/>
<evidence type="ECO:0000255" key="1">
    <source>
        <dbReference type="HAMAP-Rule" id="MF_00011"/>
    </source>
</evidence>
<organism>
    <name type="scientific">Methanococcus vannielii (strain ATCC 35089 / DSM 1224 / JCM 13029 / OCM 148 / SB)</name>
    <dbReference type="NCBI Taxonomy" id="406327"/>
    <lineage>
        <taxon>Archaea</taxon>
        <taxon>Methanobacteriati</taxon>
        <taxon>Methanobacteriota</taxon>
        <taxon>Methanomada group</taxon>
        <taxon>Methanococci</taxon>
        <taxon>Methanococcales</taxon>
        <taxon>Methanococcaceae</taxon>
        <taxon>Methanococcus</taxon>
    </lineage>
</organism>